<protein>
    <recommendedName>
        <fullName evidence="1">Phosphatidylglycerol--prolipoprotein diacylglyceryl transferase</fullName>
        <ecNumber evidence="1">2.5.1.145</ecNumber>
    </recommendedName>
</protein>
<reference key="1">
    <citation type="journal article" date="1995" name="J. Bacteriol.">
        <title>Structure-function relationship of bacterial prolipoprotein diacylglyceryl transferase: functionally significant conserved regions.</title>
        <authorList>
            <person name="Qi H.Y."/>
            <person name="Sankaran K."/>
            <person name="Gan K."/>
            <person name="Wu H.C."/>
        </authorList>
    </citation>
    <scope>NUCLEOTIDE SEQUENCE [GENOMIC DNA]</scope>
    <source>
        <strain>FDA 485</strain>
    </source>
</reference>
<sequence length="279" mass="31582">MGIVFNYIDPVAFNLGPLSVRWYGIIIAVGILLGYFVAQRALVKAGLHKDTLVDIIFYSALFGFIAARIYFVIFQWPYYAENPSEIIKIWHGGIAIHGGLIGGFIAGVIVCKVKNLNPFQIGDIVAPSIILAQGIGRWGNFMNHEAHGGPVSRAFLEQLHLPNFIIENMYINGQYYHPTFLYESIWDVAGFIILVNIRKHLKLGETFFLYLTWYSIGRFFIEGLRTDSLMLTSNIRVAQLVSILLILISISLIVYRRIKYNPPLYSKVGALPWPTKKVK</sequence>
<comment type="function">
    <text evidence="1">Catalyzes the transfer of the diacylglyceryl group from phosphatidylglycerol to the sulfhydryl group of the N-terminal cysteine of a prolipoprotein, the first step in the formation of mature lipoproteins.</text>
</comment>
<comment type="catalytic activity">
    <reaction evidence="1">
        <text>L-cysteinyl-[prolipoprotein] + a 1,2-diacyl-sn-glycero-3-phospho-(1'-sn-glycerol) = an S-1,2-diacyl-sn-glyceryl-L-cysteinyl-[prolipoprotein] + sn-glycerol 1-phosphate + H(+)</text>
        <dbReference type="Rhea" id="RHEA:56712"/>
        <dbReference type="Rhea" id="RHEA-COMP:14679"/>
        <dbReference type="Rhea" id="RHEA-COMP:14680"/>
        <dbReference type="ChEBI" id="CHEBI:15378"/>
        <dbReference type="ChEBI" id="CHEBI:29950"/>
        <dbReference type="ChEBI" id="CHEBI:57685"/>
        <dbReference type="ChEBI" id="CHEBI:64716"/>
        <dbReference type="ChEBI" id="CHEBI:140658"/>
        <dbReference type="EC" id="2.5.1.145"/>
    </reaction>
</comment>
<comment type="pathway">
    <text evidence="1">Protein modification; lipoprotein biosynthesis (diacylglyceryl transfer).</text>
</comment>
<comment type="subcellular location">
    <subcellularLocation>
        <location evidence="1">Cell membrane</location>
        <topology evidence="1">Multi-pass membrane protein</topology>
    </subcellularLocation>
</comment>
<comment type="similarity">
    <text evidence="1 2">Belongs to the Lgt family.</text>
</comment>
<organism>
    <name type="scientific">Staphylococcus aureus</name>
    <dbReference type="NCBI Taxonomy" id="1280"/>
    <lineage>
        <taxon>Bacteria</taxon>
        <taxon>Bacillati</taxon>
        <taxon>Bacillota</taxon>
        <taxon>Bacilli</taxon>
        <taxon>Bacillales</taxon>
        <taxon>Staphylococcaceae</taxon>
        <taxon>Staphylococcus</taxon>
    </lineage>
</organism>
<dbReference type="EC" id="2.5.1.145" evidence="1"/>
<dbReference type="EMBL" id="U35773">
    <property type="protein sequence ID" value="AAA86131.1"/>
    <property type="molecule type" value="Genomic_DNA"/>
</dbReference>
<dbReference type="RefSeq" id="WP_000513305.1">
    <property type="nucleotide sequence ID" value="NZ_WYDB01000004.1"/>
</dbReference>
<dbReference type="SMR" id="P60963"/>
<dbReference type="OMA" id="SIRWYGL"/>
<dbReference type="UniPathway" id="UPA00664"/>
<dbReference type="GO" id="GO:0005886">
    <property type="term" value="C:plasma membrane"/>
    <property type="evidence" value="ECO:0007669"/>
    <property type="project" value="UniProtKB-SubCell"/>
</dbReference>
<dbReference type="GO" id="GO:0008961">
    <property type="term" value="F:phosphatidylglycerol-prolipoprotein diacylglyceryl transferase activity"/>
    <property type="evidence" value="ECO:0007669"/>
    <property type="project" value="UniProtKB-UniRule"/>
</dbReference>
<dbReference type="GO" id="GO:0042158">
    <property type="term" value="P:lipoprotein biosynthetic process"/>
    <property type="evidence" value="ECO:0007669"/>
    <property type="project" value="UniProtKB-UniRule"/>
</dbReference>
<dbReference type="HAMAP" id="MF_01147">
    <property type="entry name" value="Lgt"/>
    <property type="match status" value="1"/>
</dbReference>
<dbReference type="InterPro" id="IPR001640">
    <property type="entry name" value="Lgt"/>
</dbReference>
<dbReference type="NCBIfam" id="TIGR00544">
    <property type="entry name" value="lgt"/>
    <property type="match status" value="1"/>
</dbReference>
<dbReference type="PANTHER" id="PTHR30589:SF0">
    <property type="entry name" value="PHOSPHATIDYLGLYCEROL--PROLIPOPROTEIN DIACYLGLYCERYL TRANSFERASE"/>
    <property type="match status" value="1"/>
</dbReference>
<dbReference type="PANTHER" id="PTHR30589">
    <property type="entry name" value="PROLIPOPROTEIN DIACYLGLYCERYL TRANSFERASE"/>
    <property type="match status" value="1"/>
</dbReference>
<dbReference type="Pfam" id="PF01790">
    <property type="entry name" value="LGT"/>
    <property type="match status" value="1"/>
</dbReference>
<dbReference type="PROSITE" id="PS01311">
    <property type="entry name" value="LGT"/>
    <property type="match status" value="1"/>
</dbReference>
<name>LGT_STAAU</name>
<feature type="chain" id="PRO_0000172677" description="Phosphatidylglycerol--prolipoprotein diacylglyceryl transferase">
    <location>
        <begin position="1"/>
        <end position="279"/>
    </location>
</feature>
<feature type="transmembrane region" description="Helical" evidence="1">
    <location>
        <begin position="18"/>
        <end position="38"/>
    </location>
</feature>
<feature type="transmembrane region" description="Helical" evidence="1">
    <location>
        <begin position="55"/>
        <end position="75"/>
    </location>
</feature>
<feature type="transmembrane region" description="Helical" evidence="1">
    <location>
        <begin position="89"/>
        <end position="109"/>
    </location>
</feature>
<feature type="transmembrane region" description="Helical" evidence="1">
    <location>
        <begin position="203"/>
        <end position="223"/>
    </location>
</feature>
<feature type="transmembrane region" description="Helical" evidence="1">
    <location>
        <begin position="235"/>
        <end position="255"/>
    </location>
</feature>
<feature type="binding site" evidence="1">
    <location>
        <position position="137"/>
    </location>
    <ligand>
        <name>a 1,2-diacyl-sn-glycero-3-phospho-(1'-sn-glycerol)</name>
        <dbReference type="ChEBI" id="CHEBI:64716"/>
    </ligand>
</feature>
<proteinExistence type="inferred from homology"/>
<evidence type="ECO:0000255" key="1">
    <source>
        <dbReference type="HAMAP-Rule" id="MF_01147"/>
    </source>
</evidence>
<evidence type="ECO:0000305" key="2"/>
<accession>P60963</accession>
<accession>P52282</accession>
<gene>
    <name evidence="1" type="primary">lgt</name>
</gene>
<keyword id="KW-1003">Cell membrane</keyword>
<keyword id="KW-0472">Membrane</keyword>
<keyword id="KW-0808">Transferase</keyword>
<keyword id="KW-0812">Transmembrane</keyword>
<keyword id="KW-1133">Transmembrane helix</keyword>